<sequence>MSKLTTGSFSIEDLESVQITINNIVGAAKEAAEEKAKELEKAGPTLFPGLESYRDDWNFKLLDRYEPVITPMCDQCCYCTYGPCDLSGNKRGACGIDMLGHNGREFFLRVITGTACHAAHGRHLLDHLIETFGEDLPLNLGQSNVLTPNITISTGLSPKNLGEIKPAMEFVEEQLTQLLATVHAGQESAEIDYDSKALFSGSLDHVGMEISDVVQVAAYDFPKADPEAPLIEIGMGTIDKSKPFLCVIGHNVGGVTYMMDYMEEHDLTDKMEIAGLCCTAIDLSRYKEADRRPPYAKVIGSMSKELKVIRSGMPDVIVVDEQCVRGDIVPEAQKLKIPVIASNAKIMYGLPNRTDANVDDVVEELKSGAIPGCVMLDYDKLGELCIRLTMEMGPIRDAEGITAIPTDEEFADWVAKCADCGACMIACPEELDIPEAMGFAKEGDFSYLEELHDQCIGCRRCEQVCKKEIPILNIIEKVAQKQIAEEKGWMRAGRGQVSDAEIRAEGLNLVMGTTPGIIAIIGCPNYAEGTKDVYYIAEEFLKRNFIVVTTGCGAMDIGMFKDEDGKTLYERFPGGFECGGLVNIGSCVSNAHITGAAEKVAAIFAQRTLEGNLAEISDYILNRVGACGLAWGAFSQKASSIGTGCNILGIPAVLGPHSSKYRRALIAKTYEEDKWKVYDARNGQEMPIPPAPEFLLTTAETWQEAIPMMAKACIRPSDNSMGRSIKLTHWMELHKKYLGKDPEDWWKFVRNEADLPLAKREALLKELESKHGWEIDWKKKKIISGPKIKFDVSAQPTNLKRLCKEA</sequence>
<gene>
    <name evidence="1" type="primary">cdhA1</name>
    <name type="ordered locus">MA_1016</name>
</gene>
<keyword id="KW-0004">4Fe-4S</keyword>
<keyword id="KW-0408">Iron</keyword>
<keyword id="KW-0411">Iron-sulfur</keyword>
<keyword id="KW-0479">Metal-binding</keyword>
<keyword id="KW-0484">Methanogenesis</keyword>
<keyword id="KW-0533">Nickel</keyword>
<keyword id="KW-0560">Oxidoreductase</keyword>
<keyword id="KW-1185">Reference proteome</keyword>
<keyword id="KW-0677">Repeat</keyword>
<protein>
    <recommendedName>
        <fullName evidence="1">Acetyl-CoA decarbonylase/synthase complex subunit alpha 1</fullName>
        <shortName evidence="1">ACDS complex subunit alpha 1</shortName>
        <ecNumber evidence="1">1.2.7.4</ecNumber>
    </recommendedName>
    <alternativeName>
        <fullName evidence="1">ACDS complex carbon monoxide dehydrogenase subunit alpha 1</fullName>
        <shortName evidence="1">ACDS CODH subunit alpha 1</shortName>
    </alternativeName>
</protein>
<accession>Q8TRZ4</accession>
<organism>
    <name type="scientific">Methanosarcina acetivorans (strain ATCC 35395 / DSM 2834 / JCM 12185 / C2A)</name>
    <dbReference type="NCBI Taxonomy" id="188937"/>
    <lineage>
        <taxon>Archaea</taxon>
        <taxon>Methanobacteriati</taxon>
        <taxon>Methanobacteriota</taxon>
        <taxon>Stenosarchaea group</taxon>
        <taxon>Methanomicrobia</taxon>
        <taxon>Methanosarcinales</taxon>
        <taxon>Methanosarcinaceae</taxon>
        <taxon>Methanosarcina</taxon>
    </lineage>
</organism>
<reference key="1">
    <citation type="journal article" date="2002" name="Genome Res.">
        <title>The genome of Methanosarcina acetivorans reveals extensive metabolic and physiological diversity.</title>
        <authorList>
            <person name="Galagan J.E."/>
            <person name="Nusbaum C."/>
            <person name="Roy A."/>
            <person name="Endrizzi M.G."/>
            <person name="Macdonald P."/>
            <person name="FitzHugh W."/>
            <person name="Calvo S."/>
            <person name="Engels R."/>
            <person name="Smirnov S."/>
            <person name="Atnoor D."/>
            <person name="Brown A."/>
            <person name="Allen N."/>
            <person name="Naylor J."/>
            <person name="Stange-Thomann N."/>
            <person name="DeArellano K."/>
            <person name="Johnson R."/>
            <person name="Linton L."/>
            <person name="McEwan P."/>
            <person name="McKernan K."/>
            <person name="Talamas J."/>
            <person name="Tirrell A."/>
            <person name="Ye W."/>
            <person name="Zimmer A."/>
            <person name="Barber R.D."/>
            <person name="Cann I."/>
            <person name="Graham D.E."/>
            <person name="Grahame D.A."/>
            <person name="Guss A.M."/>
            <person name="Hedderich R."/>
            <person name="Ingram-Smith C."/>
            <person name="Kuettner H.C."/>
            <person name="Krzycki J.A."/>
            <person name="Leigh J.A."/>
            <person name="Li W."/>
            <person name="Liu J."/>
            <person name="Mukhopadhyay B."/>
            <person name="Reeve J.N."/>
            <person name="Smith K."/>
            <person name="Springer T.A."/>
            <person name="Umayam L.A."/>
            <person name="White O."/>
            <person name="White R.H."/>
            <person name="de Macario E.C."/>
            <person name="Ferry J.G."/>
            <person name="Jarrell K.F."/>
            <person name="Jing H."/>
            <person name="Macario A.J.L."/>
            <person name="Paulsen I.T."/>
            <person name="Pritchett M."/>
            <person name="Sowers K.R."/>
            <person name="Swanson R.V."/>
            <person name="Zinder S.H."/>
            <person name="Lander E."/>
            <person name="Metcalf W.W."/>
            <person name="Birren B."/>
        </authorList>
    </citation>
    <scope>NUCLEOTIDE SEQUENCE [LARGE SCALE GENOMIC DNA]</scope>
    <source>
        <strain>ATCC 35395 / DSM 2834 / JCM 12185 / C2A</strain>
    </source>
</reference>
<dbReference type="EC" id="1.2.7.4" evidence="1"/>
<dbReference type="EMBL" id="AE010299">
    <property type="protein sequence ID" value="AAM04446.1"/>
    <property type="molecule type" value="Genomic_DNA"/>
</dbReference>
<dbReference type="RefSeq" id="WP_011021051.1">
    <property type="nucleotide sequence ID" value="NC_003552.1"/>
</dbReference>
<dbReference type="SMR" id="Q8TRZ4"/>
<dbReference type="FunCoup" id="Q8TRZ4">
    <property type="interactions" value="70"/>
</dbReference>
<dbReference type="STRING" id="188937.MA_1016"/>
<dbReference type="EnsemblBacteria" id="AAM04446">
    <property type="protein sequence ID" value="AAM04446"/>
    <property type="gene ID" value="MA_1016"/>
</dbReference>
<dbReference type="GeneID" id="1472906"/>
<dbReference type="KEGG" id="mac:MA_1016"/>
<dbReference type="HOGENOM" id="CLU_361186_0_0_2"/>
<dbReference type="InParanoid" id="Q8TRZ4"/>
<dbReference type="OrthoDB" id="35334at2157"/>
<dbReference type="PhylomeDB" id="Q8TRZ4"/>
<dbReference type="UniPathway" id="UPA00642"/>
<dbReference type="Proteomes" id="UP000002487">
    <property type="component" value="Chromosome"/>
</dbReference>
<dbReference type="GO" id="GO:0051539">
    <property type="term" value="F:4 iron, 4 sulfur cluster binding"/>
    <property type="evidence" value="ECO:0007669"/>
    <property type="project" value="UniProtKB-KW"/>
</dbReference>
<dbReference type="GO" id="GO:0043885">
    <property type="term" value="F:anaerobic carbon-monoxide dehydrogenase activity"/>
    <property type="evidence" value="ECO:0007669"/>
    <property type="project" value="UniProtKB-UniRule"/>
</dbReference>
<dbReference type="GO" id="GO:0050418">
    <property type="term" value="F:hydroxylamine reductase activity"/>
    <property type="evidence" value="ECO:0000318"/>
    <property type="project" value="GO_Central"/>
</dbReference>
<dbReference type="GO" id="GO:0005506">
    <property type="term" value="F:iron ion binding"/>
    <property type="evidence" value="ECO:0007669"/>
    <property type="project" value="UniProtKB-UniRule"/>
</dbReference>
<dbReference type="GO" id="GO:0016151">
    <property type="term" value="F:nickel cation binding"/>
    <property type="evidence" value="ECO:0007669"/>
    <property type="project" value="UniProtKB-UniRule"/>
</dbReference>
<dbReference type="GO" id="GO:0004601">
    <property type="term" value="F:peroxidase activity"/>
    <property type="evidence" value="ECO:0000318"/>
    <property type="project" value="GO_Central"/>
</dbReference>
<dbReference type="GO" id="GO:0006084">
    <property type="term" value="P:acetyl-CoA metabolic process"/>
    <property type="evidence" value="ECO:0007669"/>
    <property type="project" value="InterPro"/>
</dbReference>
<dbReference type="GO" id="GO:0019385">
    <property type="term" value="P:methanogenesis, from acetate"/>
    <property type="evidence" value="ECO:0007669"/>
    <property type="project" value="UniProtKB-UniRule"/>
</dbReference>
<dbReference type="GO" id="GO:0046210">
    <property type="term" value="P:nitric oxide catabolic process"/>
    <property type="evidence" value="ECO:0000318"/>
    <property type="project" value="GO_Central"/>
</dbReference>
<dbReference type="GO" id="GO:0042542">
    <property type="term" value="P:response to hydrogen peroxide"/>
    <property type="evidence" value="ECO:0000318"/>
    <property type="project" value="GO_Central"/>
</dbReference>
<dbReference type="CDD" id="cd01916">
    <property type="entry name" value="ACS_1"/>
    <property type="match status" value="1"/>
</dbReference>
<dbReference type="FunFam" id="1.10.8.190:FF:000001">
    <property type="entry name" value="Acetyl-CoA decarbonylase/synthase complex subunit alpha 1"/>
    <property type="match status" value="1"/>
</dbReference>
<dbReference type="FunFam" id="3.40.50.2030:FF:000004">
    <property type="entry name" value="Acetyl-CoA decarbonylase/synthase complex subunit alpha 1"/>
    <property type="match status" value="1"/>
</dbReference>
<dbReference type="FunFam" id="3.40.50.2030:FF:000006">
    <property type="entry name" value="Acetyl-CoA decarbonylase/synthase complex subunit alpha 1"/>
    <property type="match status" value="1"/>
</dbReference>
<dbReference type="Gene3D" id="3.30.70.20">
    <property type="match status" value="1"/>
</dbReference>
<dbReference type="Gene3D" id="3.40.50.2030">
    <property type="match status" value="2"/>
</dbReference>
<dbReference type="Gene3D" id="1.10.8.190">
    <property type="entry name" value="Carbon monoxide dehydrogenase alpha subunit. Chain M, domain 1"/>
    <property type="match status" value="1"/>
</dbReference>
<dbReference type="HAMAP" id="MF_01137">
    <property type="entry name" value="CdhA"/>
    <property type="match status" value="1"/>
</dbReference>
<dbReference type="InterPro" id="IPR017896">
    <property type="entry name" value="4Fe4S_Fe-S-bd"/>
</dbReference>
<dbReference type="InterPro" id="IPR017900">
    <property type="entry name" value="4Fe4S_Fe_S_CS"/>
</dbReference>
<dbReference type="InterPro" id="IPR004460">
    <property type="entry name" value="CdhA"/>
</dbReference>
<dbReference type="InterPro" id="IPR004137">
    <property type="entry name" value="HCP/CODH"/>
</dbReference>
<dbReference type="InterPro" id="IPR016099">
    <property type="entry name" value="Prismane-like_a/b-sand"/>
</dbReference>
<dbReference type="InterPro" id="IPR011254">
    <property type="entry name" value="Prismane-like_sf"/>
</dbReference>
<dbReference type="NCBIfam" id="TIGR00314">
    <property type="entry name" value="cdhA"/>
    <property type="match status" value="1"/>
</dbReference>
<dbReference type="PANTHER" id="PTHR30109:SF6">
    <property type="entry name" value="ACETYL-COA DECARBONYLASE_SYNTHASE COMPLEX SUBUNIT ALPHA"/>
    <property type="match status" value="1"/>
</dbReference>
<dbReference type="PANTHER" id="PTHR30109">
    <property type="entry name" value="HYDROXYLAMINE REDUCTASE"/>
    <property type="match status" value="1"/>
</dbReference>
<dbReference type="Pfam" id="PF12838">
    <property type="entry name" value="Fer4_7"/>
    <property type="match status" value="1"/>
</dbReference>
<dbReference type="Pfam" id="PF03063">
    <property type="entry name" value="Prismane"/>
    <property type="match status" value="2"/>
</dbReference>
<dbReference type="SUPFAM" id="SSF46548">
    <property type="entry name" value="alpha-helical ferredoxin"/>
    <property type="match status" value="1"/>
</dbReference>
<dbReference type="SUPFAM" id="SSF56821">
    <property type="entry name" value="Prismane protein-like"/>
    <property type="match status" value="1"/>
</dbReference>
<dbReference type="PROSITE" id="PS00198">
    <property type="entry name" value="4FE4S_FER_1"/>
    <property type="match status" value="1"/>
</dbReference>
<dbReference type="PROSITE" id="PS51379">
    <property type="entry name" value="4FE4S_FER_2"/>
    <property type="match status" value="2"/>
</dbReference>
<evidence type="ECO:0000255" key="1">
    <source>
        <dbReference type="HAMAP-Rule" id="MF_01137"/>
    </source>
</evidence>
<proteinExistence type="inferred from homology"/>
<feature type="chain" id="PRO_0000155074" description="Acetyl-CoA decarbonylase/synthase complex subunit alpha 1">
    <location>
        <begin position="1"/>
        <end position="806"/>
    </location>
</feature>
<feature type="domain" description="4Fe-4S ferredoxin-type 1" evidence="1">
    <location>
        <begin position="407"/>
        <end position="436"/>
    </location>
</feature>
<feature type="domain" description="4Fe-4S ferredoxin-type 2" evidence="1">
    <location>
        <begin position="446"/>
        <end position="475"/>
    </location>
</feature>
<feature type="binding site" evidence="1">
    <location>
        <position position="73"/>
    </location>
    <ligand>
        <name>[4Fe-4S] cluster</name>
        <dbReference type="ChEBI" id="CHEBI:49883"/>
        <label>1</label>
        <note>ligand shared between dimeric partners</note>
    </ligand>
</feature>
<feature type="binding site" evidence="1">
    <location>
        <position position="76"/>
    </location>
    <ligand>
        <name>[4Fe-4S] cluster</name>
        <dbReference type="ChEBI" id="CHEBI:49883"/>
        <label>2</label>
    </ligand>
</feature>
<feature type="binding site" evidence="1">
    <location>
        <position position="77"/>
    </location>
    <ligand>
        <name>[4Fe-4S] cluster</name>
        <dbReference type="ChEBI" id="CHEBI:49883"/>
        <label>1</label>
        <note>ligand shared between dimeric partners</note>
    </ligand>
</feature>
<feature type="binding site" evidence="1">
    <location>
        <position position="79"/>
    </location>
    <ligand>
        <name>[4Fe-4S] cluster</name>
        <dbReference type="ChEBI" id="CHEBI:49883"/>
        <label>2</label>
    </ligand>
</feature>
<feature type="binding site" evidence="1">
    <location>
        <position position="84"/>
    </location>
    <ligand>
        <name>[4Fe-4S] cluster</name>
        <dbReference type="ChEBI" id="CHEBI:49883"/>
        <label>2</label>
    </ligand>
</feature>
<feature type="binding site" evidence="1">
    <location>
        <position position="94"/>
    </location>
    <ligand>
        <name>[4Fe-4S] cluster</name>
        <dbReference type="ChEBI" id="CHEBI:49883"/>
        <label>2</label>
    </ligand>
</feature>
<feature type="binding site" evidence="1">
    <location>
        <position position="117"/>
    </location>
    <ligand>
        <name>CO</name>
        <dbReference type="ChEBI" id="CHEBI:17245"/>
    </ligand>
</feature>
<feature type="binding site" evidence="1">
    <location>
        <position position="250"/>
    </location>
    <ligand>
        <name>[Ni-4Fe-4S] cluster</name>
        <dbReference type="ChEBI" id="CHEBI:47739"/>
    </ligand>
</feature>
<feature type="binding site" evidence="1">
    <location>
        <position position="278"/>
    </location>
    <ligand>
        <name>[Ni-4Fe-4S] cluster</name>
        <dbReference type="ChEBI" id="CHEBI:47739"/>
    </ligand>
</feature>
<feature type="binding site" evidence="1">
    <location>
        <position position="323"/>
    </location>
    <ligand>
        <name>[Ni-4Fe-4S] cluster</name>
        <dbReference type="ChEBI" id="CHEBI:47739"/>
    </ligand>
</feature>
<feature type="binding site" evidence="1">
    <location>
        <position position="417"/>
    </location>
    <ligand>
        <name>[4Fe-4S] cluster</name>
        <dbReference type="ChEBI" id="CHEBI:49883"/>
        <label>3</label>
    </ligand>
</feature>
<feature type="binding site" evidence="1">
    <location>
        <position position="420"/>
    </location>
    <ligand>
        <name>[4Fe-4S] cluster</name>
        <dbReference type="ChEBI" id="CHEBI:49883"/>
        <label>3</label>
    </ligand>
</feature>
<feature type="binding site" evidence="1">
    <location>
        <position position="423"/>
    </location>
    <ligand>
        <name>[4Fe-4S] cluster</name>
        <dbReference type="ChEBI" id="CHEBI:49883"/>
        <label>3</label>
    </ligand>
</feature>
<feature type="binding site" evidence="1">
    <location>
        <position position="427"/>
    </location>
    <ligand>
        <name>[4Fe-4S] cluster</name>
        <dbReference type="ChEBI" id="CHEBI:49883"/>
        <label>4</label>
    </ligand>
</feature>
<feature type="binding site" evidence="1">
    <location>
        <position position="455"/>
    </location>
    <ligand>
        <name>[4Fe-4S] cluster</name>
        <dbReference type="ChEBI" id="CHEBI:49883"/>
        <label>4</label>
    </ligand>
</feature>
<feature type="binding site" evidence="1">
    <location>
        <position position="458"/>
    </location>
    <ligand>
        <name>[4Fe-4S] cluster</name>
        <dbReference type="ChEBI" id="CHEBI:49883"/>
        <label>4</label>
    </ligand>
</feature>
<feature type="binding site" evidence="1">
    <location>
        <position position="461"/>
    </location>
    <ligand>
        <name>[4Fe-4S] cluster</name>
        <dbReference type="ChEBI" id="CHEBI:49883"/>
        <label>4</label>
    </ligand>
</feature>
<feature type="binding site" evidence="1">
    <location>
        <position position="465"/>
    </location>
    <ligand>
        <name>[4Fe-4S] cluster</name>
        <dbReference type="ChEBI" id="CHEBI:49883"/>
        <label>3</label>
    </ligand>
</feature>
<feature type="binding site" evidence="1">
    <location>
        <position position="523"/>
    </location>
    <ligand>
        <name>[Ni-4Fe-4S] cluster</name>
        <dbReference type="ChEBI" id="CHEBI:47739"/>
    </ligand>
</feature>
<feature type="binding site" evidence="1">
    <location>
        <position position="552"/>
    </location>
    <ligand>
        <name>[Ni-4Fe-4S] cluster</name>
        <dbReference type="ChEBI" id="CHEBI:47739"/>
    </ligand>
</feature>
<feature type="binding site" evidence="1">
    <location>
        <position position="587"/>
    </location>
    <ligand>
        <name>[Ni-4Fe-4S] cluster</name>
        <dbReference type="ChEBI" id="CHEBI:47739"/>
    </ligand>
</feature>
<name>ACDA1_METAC</name>
<comment type="function">
    <text evidence="1">Part of the ACDS complex that catalyzes the reversible cleavage of acetyl-CoA, allowing growth on acetate as sole source of carbon and energy. The alpha-epsilon subcomponent functions as a carbon monoxide dehydrogenase.</text>
</comment>
<comment type="catalytic activity">
    <reaction evidence="1">
        <text>CO + 2 oxidized [2Fe-2S]-[ferredoxin] + H2O = 2 reduced [2Fe-2S]-[ferredoxin] + CO2 + 2 H(+)</text>
        <dbReference type="Rhea" id="RHEA:21040"/>
        <dbReference type="Rhea" id="RHEA-COMP:10000"/>
        <dbReference type="Rhea" id="RHEA-COMP:10001"/>
        <dbReference type="ChEBI" id="CHEBI:15377"/>
        <dbReference type="ChEBI" id="CHEBI:15378"/>
        <dbReference type="ChEBI" id="CHEBI:16526"/>
        <dbReference type="ChEBI" id="CHEBI:17245"/>
        <dbReference type="ChEBI" id="CHEBI:33737"/>
        <dbReference type="ChEBI" id="CHEBI:33738"/>
        <dbReference type="EC" id="1.2.7.4"/>
    </reaction>
</comment>
<comment type="cofactor">
    <cofactor evidence="1">
        <name>[4Fe-4S] cluster</name>
        <dbReference type="ChEBI" id="CHEBI:49883"/>
    </cofactor>
    <text evidence="1">Binds 7 [4Fe-4S] clusters per heterotetramer.</text>
</comment>
<comment type="cofactor">
    <cofactor evidence="1">
        <name>[Ni-4Fe-4S] cluster</name>
        <dbReference type="ChEBI" id="CHEBI:47739"/>
    </cofactor>
    <text evidence="1">Binds 2 [Ni-4Fe-4S] clusters per heterotetramer.</text>
</comment>
<comment type="pathway">
    <text evidence="1">One-carbon metabolism; methanogenesis from acetate.</text>
</comment>
<comment type="subunit">
    <text evidence="1">Heterotetramer of two alpha and two epsilon subunits. The ACDS complex is made up of alpha, epsilon, beta, gamma and delta subunits with a probable stoichiometry of (alpha(2)epsilon(2))(4)-beta(8)-(gamma(1)delta(1))(8).</text>
</comment>
<comment type="domain">
    <text evidence="1">Cluster B is an all-cysteinyl-liganded 4Fe-4S cluster; cluster C is a mixed Ni-Fe-S cluster which is the active site of CO oxidation. Cluster D is also an all-cysteinyl-liganded 4Fe-4S cluster that bridges the two subunits of the CODH dimer. Contains two additional 4Fe-4S clusters, dubbed E and F, that probably transport electrons from ferredoxin to the B cluster.</text>
</comment>
<comment type="similarity">
    <text evidence="1">Belongs to the Ni-containing carbon monoxide dehydrogenase family.</text>
</comment>